<name>DAAA_BACYM</name>
<proteinExistence type="evidence at protein level"/>
<gene>
    <name type="primary">dat</name>
</gene>
<protein>
    <recommendedName>
        <fullName>D-alanine aminotransferase</fullName>
        <ecNumber>2.6.1.21</ecNumber>
    </recommendedName>
    <alternativeName>
        <fullName>D-amino acid aminotransferase</fullName>
    </alternativeName>
    <alternativeName>
        <fullName>D-amino acid transaminase</fullName>
        <shortName>DAAT</shortName>
    </alternativeName>
    <alternativeName>
        <fullName>D-aspartate aminotransferase</fullName>
    </alternativeName>
</protein>
<sequence>MGYTLWNDQIVKDEEVKIDKEDRGYQFGDGVYEVVKVYNGEMFTVNEHIDRLYASAEKIRITIPYTKDKFHQLLHELVEKNELNTGHIYFQVTRGTSPRAHQFPENTVKPVIIGYTKENPRPLENLEKGVKATFVEDIRWLRCDIKSLNLLGAVLAKQEAHEKGCYEAILHRNNTVTEGSSSNVFGIKDGILYTHPANNMILKGITRDVVIACANEINMPVKEIPFTTHEALKMDELFVTSTTSEITPVIEIDGKLIRDGKVGEWTRKLQKQFETKIPKPLHI</sequence>
<comment type="function">
    <text evidence="1 3">Acts on the D-isomers of alanine, leucine, aspartate, glutamate, aminobutyrate, norvaline and asparagine. The enzyme transfers an amino group from a substrate D-amino acid to the pyridoxal phosphate cofactor to form pyridoxamine and an alpha-keto acid in the first half-reaction. The second-half reaction is the reverse of the first, transferring the amino group from the pyridoxamine to a second alpha-keto acid to form the product D-amino acid via a ping-pong mechanism. This is an important process in the formation of D-alanine and D-glutamate, which are essential bacterial cell wall components.</text>
</comment>
<comment type="catalytic activity">
    <reaction evidence="1 3">
        <text>D-alanine + 2-oxoglutarate = D-glutamate + pyruvate</text>
        <dbReference type="Rhea" id="RHEA:15869"/>
        <dbReference type="ChEBI" id="CHEBI:15361"/>
        <dbReference type="ChEBI" id="CHEBI:16810"/>
        <dbReference type="ChEBI" id="CHEBI:29986"/>
        <dbReference type="ChEBI" id="CHEBI:57416"/>
        <dbReference type="EC" id="2.6.1.21"/>
    </reaction>
</comment>
<comment type="cofactor">
    <cofactor evidence="2">
        <name>pyridoxal 5'-phosphate</name>
        <dbReference type="ChEBI" id="CHEBI:597326"/>
    </cofactor>
</comment>
<comment type="biophysicochemical properties">
    <absorption>
        <max evidence="1">279 nm</max>
        <text>Holoenzyme exhibits additional strong peaks at 333 nm and 415 nm. Addition of D-alanine causes a decrease in absorbance at 419 nm and an increase at 335 nm.</text>
    </absorption>
    <kinetics>
        <KM evidence="1">2.2 mM for D-alanine</KM>
        <KM evidence="1">5.9 mM for alpha-ketoglutarate</KM>
        <KM evidence="1">2.2 mM for alpha-ketobutyrate</KM>
        <KM evidence="1">2.2 mM for alpha-ketovalerate</KM>
    </kinetics>
    <phDependence>
        <text evidence="1">Optimum pH is 8.3.</text>
    </phDependence>
    <temperatureDependence>
        <text evidence="1">Optimum temperature is 60 degrees Celsius.</text>
    </temperatureDependence>
</comment>
<comment type="subunit">
    <text evidence="1 2">Homodimer.</text>
</comment>
<comment type="similarity">
    <text evidence="6">Belongs to the class-IV pyridoxal-phosphate-dependent aminotransferase family.</text>
</comment>
<organism>
    <name type="scientific">Bacillus sp. (strain YM-1)</name>
    <dbReference type="NCBI Taxonomy" id="72579"/>
    <lineage>
        <taxon>Bacteria</taxon>
        <taxon>Bacillati</taxon>
        <taxon>Bacillota</taxon>
        <taxon>Bacilli</taxon>
        <taxon>Bacillales</taxon>
        <taxon>Bacillaceae</taxon>
        <taxon>Bacillus</taxon>
    </lineage>
</organism>
<evidence type="ECO:0000269" key="1">
    <source>
    </source>
</evidence>
<evidence type="ECO:0000269" key="2">
    <source>
    </source>
</evidence>
<evidence type="ECO:0000269" key="3">
    <source>
    </source>
</evidence>
<evidence type="ECO:0000269" key="4">
    <source>
    </source>
</evidence>
<evidence type="ECO:0000269" key="5">
    <source>
    </source>
</evidence>
<evidence type="ECO:0000305" key="6"/>
<evidence type="ECO:0007829" key="7">
    <source>
        <dbReference type="PDB" id="2DAB"/>
    </source>
</evidence>
<evidence type="ECO:0007829" key="8">
    <source>
        <dbReference type="PDB" id="3DAA"/>
    </source>
</evidence>
<evidence type="ECO:0007829" key="9">
    <source>
        <dbReference type="PDB" id="3LQS"/>
    </source>
</evidence>
<dbReference type="EC" id="2.6.1.21"/>
<dbReference type="EMBL" id="J04460">
    <property type="protein sequence ID" value="AAA22252.1"/>
    <property type="molecule type" value="Genomic_DNA"/>
</dbReference>
<dbReference type="PIR" id="A31422">
    <property type="entry name" value="A31422"/>
</dbReference>
<dbReference type="PDB" id="1A0G">
    <property type="method" value="X-ray"/>
    <property type="resolution" value="2.00 A"/>
    <property type="chains" value="A/B=2-283"/>
</dbReference>
<dbReference type="PDB" id="1DAA">
    <property type="method" value="X-ray"/>
    <property type="resolution" value="1.94 A"/>
    <property type="chains" value="A/B=2-283"/>
</dbReference>
<dbReference type="PDB" id="1G2W">
    <property type="method" value="X-ray"/>
    <property type="resolution" value="2.00 A"/>
    <property type="chains" value="A/B=2-283"/>
</dbReference>
<dbReference type="PDB" id="2DAA">
    <property type="method" value="X-ray"/>
    <property type="resolution" value="2.10 A"/>
    <property type="chains" value="A/B=2-283"/>
</dbReference>
<dbReference type="PDB" id="2DAB">
    <property type="method" value="X-ray"/>
    <property type="resolution" value="2.00 A"/>
    <property type="chains" value="A/B=2-283"/>
</dbReference>
<dbReference type="PDB" id="3DAA">
    <property type="method" value="X-ray"/>
    <property type="resolution" value="1.90 A"/>
    <property type="chains" value="A/B=2-278"/>
</dbReference>
<dbReference type="PDB" id="3LQS">
    <property type="method" value="X-ray"/>
    <property type="resolution" value="1.90 A"/>
    <property type="chains" value="A/B=2-281"/>
</dbReference>
<dbReference type="PDB" id="4DAA">
    <property type="method" value="X-ray"/>
    <property type="resolution" value="2.40 A"/>
    <property type="chains" value="A/B=2-278"/>
</dbReference>
<dbReference type="PDB" id="5DAA">
    <property type="method" value="X-ray"/>
    <property type="resolution" value="2.90 A"/>
    <property type="chains" value="A/B=2-278"/>
</dbReference>
<dbReference type="PDBsum" id="1A0G"/>
<dbReference type="PDBsum" id="1DAA"/>
<dbReference type="PDBsum" id="1G2W"/>
<dbReference type="PDBsum" id="2DAA"/>
<dbReference type="PDBsum" id="2DAB"/>
<dbReference type="PDBsum" id="3DAA"/>
<dbReference type="PDBsum" id="3LQS"/>
<dbReference type="PDBsum" id="4DAA"/>
<dbReference type="PDBsum" id="5DAA"/>
<dbReference type="SMR" id="P19938"/>
<dbReference type="DrugBank" id="DB02142">
    <property type="generic name" value="Pyridoxamine-5'-Phosphate"/>
</dbReference>
<dbReference type="KEGG" id="ag:AAA22252"/>
<dbReference type="BRENDA" id="2.6.1.21">
    <property type="organism ID" value="691"/>
</dbReference>
<dbReference type="SABIO-RK" id="P19938"/>
<dbReference type="EvolutionaryTrace" id="P19938"/>
<dbReference type="GO" id="GO:0005829">
    <property type="term" value="C:cytosol"/>
    <property type="evidence" value="ECO:0007669"/>
    <property type="project" value="TreeGrafter"/>
</dbReference>
<dbReference type="GO" id="GO:0047810">
    <property type="term" value="F:D-alanine-2-oxoglutarate aminotransferase activity"/>
    <property type="evidence" value="ECO:0000314"/>
    <property type="project" value="UniProtKB"/>
</dbReference>
<dbReference type="GO" id="GO:0030170">
    <property type="term" value="F:pyridoxal phosphate binding"/>
    <property type="evidence" value="ECO:0000314"/>
    <property type="project" value="UniProtKB"/>
</dbReference>
<dbReference type="GO" id="GO:0046437">
    <property type="term" value="P:D-amino acid biosynthetic process"/>
    <property type="evidence" value="ECO:0000314"/>
    <property type="project" value="UniProtKB"/>
</dbReference>
<dbReference type="GO" id="GO:0019478">
    <property type="term" value="P:D-amino acid catabolic process"/>
    <property type="evidence" value="ECO:0000314"/>
    <property type="project" value="UniProtKB"/>
</dbReference>
<dbReference type="CDD" id="cd01558">
    <property type="entry name" value="D-AAT_like"/>
    <property type="match status" value="1"/>
</dbReference>
<dbReference type="FunFam" id="3.20.10.10:FF:000002">
    <property type="entry name" value="D-alanine aminotransferase"/>
    <property type="match status" value="1"/>
</dbReference>
<dbReference type="FunFam" id="3.30.470.10:FF:000009">
    <property type="entry name" value="D-alanine aminotransferase"/>
    <property type="match status" value="1"/>
</dbReference>
<dbReference type="Gene3D" id="3.30.470.10">
    <property type="match status" value="1"/>
</dbReference>
<dbReference type="Gene3D" id="3.20.10.10">
    <property type="entry name" value="D-amino Acid Aminotransferase, subunit A, domain 2"/>
    <property type="match status" value="1"/>
</dbReference>
<dbReference type="InterPro" id="IPR001544">
    <property type="entry name" value="Aminotrans_IV"/>
</dbReference>
<dbReference type="InterPro" id="IPR018300">
    <property type="entry name" value="Aminotrans_IV_CS"/>
</dbReference>
<dbReference type="InterPro" id="IPR036038">
    <property type="entry name" value="Aminotransferase-like"/>
</dbReference>
<dbReference type="InterPro" id="IPR043132">
    <property type="entry name" value="BCAT-like_C"/>
</dbReference>
<dbReference type="InterPro" id="IPR043131">
    <property type="entry name" value="BCAT-like_N"/>
</dbReference>
<dbReference type="InterPro" id="IPR050571">
    <property type="entry name" value="Class-IV_PLP-Dep_Aminotrnsfr"/>
</dbReference>
<dbReference type="InterPro" id="IPR005784">
    <property type="entry name" value="D_amino_transT"/>
</dbReference>
<dbReference type="NCBIfam" id="TIGR01121">
    <property type="entry name" value="D_amino_aminoT"/>
    <property type="match status" value="1"/>
</dbReference>
<dbReference type="PANTHER" id="PTHR42743">
    <property type="entry name" value="AMINO-ACID AMINOTRANSFERASE"/>
    <property type="match status" value="1"/>
</dbReference>
<dbReference type="PANTHER" id="PTHR42743:SF10">
    <property type="entry name" value="D-ALANINE AMINOTRANSFERASE"/>
    <property type="match status" value="1"/>
</dbReference>
<dbReference type="Pfam" id="PF01063">
    <property type="entry name" value="Aminotran_4"/>
    <property type="match status" value="1"/>
</dbReference>
<dbReference type="SUPFAM" id="SSF56752">
    <property type="entry name" value="D-aminoacid aminotransferase-like PLP-dependent enzymes"/>
    <property type="match status" value="1"/>
</dbReference>
<dbReference type="PROSITE" id="PS00770">
    <property type="entry name" value="AA_TRANSFER_CLASS_4"/>
    <property type="match status" value="1"/>
</dbReference>
<feature type="initiator methionine" description="Removed" evidence="1">
    <location>
        <position position="1"/>
    </location>
</feature>
<feature type="chain" id="PRO_0000103248" description="D-alanine aminotransferase">
    <location>
        <begin position="2"/>
        <end position="283"/>
    </location>
</feature>
<feature type="active site" description="Proton acceptor" evidence="2">
    <location>
        <position position="146"/>
    </location>
</feature>
<feature type="binding site" evidence="3">
    <location>
        <position position="32"/>
    </location>
    <ligand>
        <name>substrate</name>
    </ligand>
</feature>
<feature type="binding site" evidence="3">
    <location>
        <position position="51"/>
    </location>
    <ligand>
        <name>pyridoxal 5'-phosphate</name>
        <dbReference type="ChEBI" id="CHEBI:597326"/>
    </ligand>
</feature>
<feature type="binding site" evidence="3">
    <location>
        <position position="99"/>
    </location>
    <ligand>
        <name>substrate</name>
    </ligand>
</feature>
<feature type="binding site" evidence="3">
    <location>
        <position position="101"/>
    </location>
    <ligand>
        <name>substrate</name>
    </ligand>
</feature>
<feature type="binding site" evidence="3">
    <location>
        <position position="178"/>
    </location>
    <ligand>
        <name>pyridoxal 5'-phosphate</name>
        <dbReference type="ChEBI" id="CHEBI:597326"/>
    </ligand>
</feature>
<feature type="modified residue" description="N6-(pyridoxal phosphate)lysine" evidence="2">
    <location>
        <position position="146"/>
    </location>
</feature>
<feature type="mutagenesis site" description="Loss of transaminase activity and small gain in racemase activity." evidence="5">
    <original>E</original>
    <variation>K</variation>
    <location>
        <position position="178"/>
    </location>
</feature>
<feature type="mutagenesis site" description="Inactivates enzyme." evidence="4">
    <original>L</original>
    <variation>A</variation>
    <location>
        <position position="202"/>
    </location>
</feature>
<feature type="strand" evidence="8">
    <location>
        <begin position="3"/>
        <end position="6"/>
    </location>
</feature>
<feature type="strand" evidence="8">
    <location>
        <begin position="9"/>
        <end position="12"/>
    </location>
</feature>
<feature type="helix" evidence="8">
    <location>
        <begin position="13"/>
        <end position="15"/>
    </location>
</feature>
<feature type="helix" evidence="8">
    <location>
        <begin position="23"/>
        <end position="26"/>
    </location>
</feature>
<feature type="strand" evidence="8">
    <location>
        <begin position="30"/>
        <end position="38"/>
    </location>
</feature>
<feature type="strand" evidence="9">
    <location>
        <begin position="41"/>
        <end position="44"/>
    </location>
</feature>
<feature type="helix" evidence="8">
    <location>
        <begin position="45"/>
        <end position="58"/>
    </location>
</feature>
<feature type="helix" evidence="8">
    <location>
        <begin position="67"/>
        <end position="81"/>
    </location>
</feature>
<feature type="strand" evidence="8">
    <location>
        <begin position="85"/>
        <end position="94"/>
    </location>
</feature>
<feature type="strand" evidence="8">
    <location>
        <begin position="111"/>
        <end position="118"/>
    </location>
</feature>
<feature type="helix" evidence="8">
    <location>
        <begin position="123"/>
        <end position="128"/>
    </location>
</feature>
<feature type="strand" evidence="8">
    <location>
        <begin position="130"/>
        <end position="136"/>
    </location>
</feature>
<feature type="helix" evidence="8">
    <location>
        <begin position="151"/>
        <end position="162"/>
    </location>
</feature>
<feature type="strand" evidence="8">
    <location>
        <begin position="166"/>
        <end position="172"/>
    </location>
</feature>
<feature type="strand" evidence="8">
    <location>
        <begin position="175"/>
        <end position="179"/>
    </location>
</feature>
<feature type="strand" evidence="8">
    <location>
        <begin position="182"/>
        <end position="188"/>
    </location>
</feature>
<feature type="strand" evidence="8">
    <location>
        <begin position="191"/>
        <end position="194"/>
    </location>
</feature>
<feature type="helix" evidence="8">
    <location>
        <begin position="205"/>
        <end position="216"/>
    </location>
</feature>
<feature type="helix" evidence="8">
    <location>
        <begin position="228"/>
        <end position="232"/>
    </location>
</feature>
<feature type="strand" evidence="8">
    <location>
        <begin position="235"/>
        <end position="241"/>
    </location>
</feature>
<feature type="turn" evidence="8">
    <location>
        <begin position="242"/>
        <end position="244"/>
    </location>
</feature>
<feature type="strand" evidence="8">
    <location>
        <begin position="245"/>
        <end position="252"/>
    </location>
</feature>
<feature type="strand" evidence="8">
    <location>
        <begin position="255"/>
        <end position="257"/>
    </location>
</feature>
<feature type="turn" evidence="7">
    <location>
        <begin position="258"/>
        <end position="260"/>
    </location>
</feature>
<feature type="helix" evidence="8">
    <location>
        <begin position="264"/>
        <end position="274"/>
    </location>
</feature>
<reference key="1">
    <citation type="journal article" date="1989" name="J. Biol. Chem.">
        <title>The primary structure of thermostable D-amino acid aminotransferase from a thermophilic Bacillus species and its correlation with L-amino acid aminotransferases.</title>
        <authorList>
            <person name="Tanizawa K."/>
            <person name="Asano S."/>
            <person name="Masu Y."/>
            <person name="Kuramitsu S."/>
            <person name="Kagamiyama H."/>
            <person name="Tanaka H."/>
            <person name="Soda K."/>
        </authorList>
    </citation>
    <scope>NUCLEOTIDE SEQUENCE [GENOMIC DNA]</scope>
    <scope>PARTIAL PROTEIN SEQUENCE</scope>
</reference>
<reference key="2">
    <citation type="journal article" date="1989" name="J. Biol. Chem.">
        <title>Thermostable D-amino acid aminotransferase from a thermophilic Bacillus species. Purification, characterization, and active site sequence determination.</title>
        <authorList>
            <person name="Tanizawa K."/>
            <person name="Masu Y."/>
            <person name="Asano S."/>
            <person name="Tanaka H."/>
            <person name="Soda K."/>
        </authorList>
    </citation>
    <scope>PROTEIN SEQUENCE OF 2-21; 143-157 AND 281-283</scope>
    <scope>FUNCTION</scope>
    <scope>CATALYTIC ACTIVITY</scope>
    <scope>SUBUNIT</scope>
    <scope>BIOPHYSICOCHEMICAL PROPERTIES</scope>
</reference>
<reference key="3">
    <citation type="journal article" date="1995" name="Biochemistry">
        <title>Crystal structure of a D-amino acid aminotransferase: how the protein controls stereoselectivity.</title>
        <authorList>
            <person name="Sugio S."/>
            <person name="Petsko G.A."/>
            <person name="Manning J.M."/>
            <person name="Soda K."/>
            <person name="Ringe D."/>
        </authorList>
    </citation>
    <scope>X-RAY CRYSTALLOGRAPHY (1.94 ANGSTROMS)</scope>
    <scope>COFACTOR</scope>
    <scope>SUBUNIT</scope>
</reference>
<reference key="4">
    <citation type="journal article" date="1998" name="Biochemistry">
        <title>Crystallographic study of steps along the reaction pathway of D-amino acid aminotransferase.</title>
        <authorList>
            <person name="Peisach D."/>
            <person name="Chipman D.M."/>
            <person name="van Ophem P.W."/>
            <person name="Manning J.M."/>
            <person name="Petsko G.A."/>
            <person name="Ringe D."/>
        </authorList>
    </citation>
    <scope>X-RAY CRYSTALLOGRAPHY (2.1 ANGSTROMS)</scope>
    <scope>FUNCTION</scope>
    <scope>CATALYTIC ACTIVITY</scope>
</reference>
<reference key="5">
    <citation type="journal article" date="1998" name="Protein Eng.">
        <title>Crystal structures of L201A mutant of D-amino acid aminotransferase at 2.0-A resolution: implication of the structural role of Leu201 in transamination.</title>
        <authorList>
            <person name="Sugio S."/>
            <person name="Kashima A."/>
            <person name="Kishimoto K."/>
            <person name="Peisach D."/>
            <person name="Petsko G.A."/>
            <person name="Ringe D."/>
            <person name="Yoshimura T."/>
            <person name="Esaki N."/>
        </authorList>
    </citation>
    <scope>X-RAY CRYSTALLOGRAPHY (2.0 ANGSTROMS)</scope>
    <scope>MUTAGENESIS OF LEU-202</scope>
</reference>
<reference key="6">
    <citation type="journal article" date="1999" name="Biochemistry">
        <title>Effects of the E177K mutation in D-amino acid transaminase. Studies on an essential coenzyme anchoring group that contributes to stereochemical fidelity.</title>
        <authorList>
            <person name="van Ophem P.W."/>
            <person name="Peisach D."/>
            <person name="Erickson S.D."/>
            <person name="Soda K."/>
            <person name="Ringe D."/>
            <person name="Manning J.M."/>
        </authorList>
    </citation>
    <scope>X-RAY CRYSTALLOGRAPHY (2.9 ANGSTROMS)</scope>
    <scope>MUTAGENESIS OF GLU-178</scope>
</reference>
<keyword id="KW-0002">3D-structure</keyword>
<keyword id="KW-0032">Aminotransferase</keyword>
<keyword id="KW-0903">Direct protein sequencing</keyword>
<keyword id="KW-0663">Pyridoxal phosphate</keyword>
<keyword id="KW-0808">Transferase</keyword>
<accession>P19938</accession>
<accession>P83771</accession>